<feature type="chain" id="PRO_0000117814" description="NADH-ubiquinone oxidoreductase chain 3">
    <location>
        <begin position="1"/>
        <end position="121"/>
    </location>
</feature>
<feature type="transmembrane region" description="Helical" evidence="2">
    <location>
        <begin position="11"/>
        <end position="31"/>
    </location>
</feature>
<feature type="transmembrane region" description="Helical" evidence="2">
    <location>
        <begin position="63"/>
        <end position="83"/>
    </location>
</feature>
<feature type="transmembrane region" description="Helical" evidence="2">
    <location>
        <begin position="90"/>
        <end position="110"/>
    </location>
</feature>
<gene>
    <name type="primary">NAD3</name>
</gene>
<geneLocation type="mitochondrion"/>
<protein>
    <recommendedName>
        <fullName>NADH-ubiquinone oxidoreductase chain 3</fullName>
        <ecNumber>7.1.1.2</ecNumber>
    </recommendedName>
    <alternativeName>
        <fullName>NADH dehydrogenase subunit 3</fullName>
    </alternativeName>
</protein>
<accession>O99978</accession>
<organism>
    <name type="scientific">Porphyra purpurea</name>
    <name type="common">Red seaweed</name>
    <name type="synonym">Ulva purpurea</name>
    <dbReference type="NCBI Taxonomy" id="2787"/>
    <lineage>
        <taxon>Eukaryota</taxon>
        <taxon>Rhodophyta</taxon>
        <taxon>Bangiophyceae</taxon>
        <taxon>Bangiales</taxon>
        <taxon>Bangiaceae</taxon>
        <taxon>Porphyra</taxon>
    </lineage>
</organism>
<sequence length="121" mass="14073">MNVLYNEYSAILTFFAISFSISTLILALSYFLNPQPSDQEKVSAYECGFNPFDDARATFDVRFYLVAILFLIFDLEISFLFPWSLVLGQLSIFGFWSMIVFLIILTLGFIYEWKKGALEWE</sequence>
<evidence type="ECO:0000250" key="1"/>
<evidence type="ECO:0000255" key="2"/>
<evidence type="ECO:0000305" key="3"/>
<reference key="1">
    <citation type="submission" date="1998-12" db="EMBL/GenBank/DDBJ databases">
        <title>Complete sequence of the mitochondrial DNA of the red alga, Porphyra purpurea. Inverted repeats, sequence polymorphisms, and cyanobacterial introns.</title>
        <authorList>
            <person name="Burger G."/>
            <person name="Saint-Louis D."/>
            <person name="Gray M.W."/>
            <person name="Lang B.F."/>
        </authorList>
    </citation>
    <scope>NUCLEOTIDE SEQUENCE [GENOMIC DNA]</scope>
</reference>
<name>NU3M_PORPU</name>
<dbReference type="EC" id="7.1.1.2"/>
<dbReference type="EMBL" id="AF114794">
    <property type="protein sequence ID" value="AAD03105.1"/>
    <property type="molecule type" value="Genomic_DNA"/>
</dbReference>
<dbReference type="PIR" id="T11226">
    <property type="entry name" value="T11226"/>
</dbReference>
<dbReference type="RefSeq" id="NP_049302.1">
    <property type="nucleotide sequence ID" value="NC_002007.1"/>
</dbReference>
<dbReference type="SMR" id="O99978"/>
<dbReference type="GeneID" id="809774"/>
<dbReference type="GO" id="GO:0031966">
    <property type="term" value="C:mitochondrial membrane"/>
    <property type="evidence" value="ECO:0007669"/>
    <property type="project" value="UniProtKB-SubCell"/>
</dbReference>
<dbReference type="GO" id="GO:0030964">
    <property type="term" value="C:NADH dehydrogenase complex"/>
    <property type="evidence" value="ECO:0007669"/>
    <property type="project" value="TreeGrafter"/>
</dbReference>
<dbReference type="GO" id="GO:0008137">
    <property type="term" value="F:NADH dehydrogenase (ubiquinone) activity"/>
    <property type="evidence" value="ECO:0007669"/>
    <property type="project" value="UniProtKB-EC"/>
</dbReference>
<dbReference type="FunFam" id="1.20.58.1610:FF:000004">
    <property type="entry name" value="NADH-quinone oxidoreductase subunit A"/>
    <property type="match status" value="1"/>
</dbReference>
<dbReference type="Gene3D" id="1.20.58.1610">
    <property type="entry name" value="NADH:ubiquinone/plastoquinone oxidoreductase, chain 3"/>
    <property type="match status" value="1"/>
</dbReference>
<dbReference type="HAMAP" id="MF_01394">
    <property type="entry name" value="NDH1_NuoA"/>
    <property type="match status" value="1"/>
</dbReference>
<dbReference type="InterPro" id="IPR023043">
    <property type="entry name" value="NAD(P)H_OxRDtase_bac/plastid"/>
</dbReference>
<dbReference type="InterPro" id="IPR000440">
    <property type="entry name" value="NADH_UbQ/plastoQ_OxRdtase_su3"/>
</dbReference>
<dbReference type="InterPro" id="IPR038430">
    <property type="entry name" value="NDAH_ubi_oxred_su3_sf"/>
</dbReference>
<dbReference type="PANTHER" id="PTHR11058">
    <property type="entry name" value="NADH-UBIQUINONE OXIDOREDUCTASE CHAIN 3"/>
    <property type="match status" value="1"/>
</dbReference>
<dbReference type="PANTHER" id="PTHR11058:SF9">
    <property type="entry name" value="NADH-UBIQUINONE OXIDOREDUCTASE CHAIN 3"/>
    <property type="match status" value="1"/>
</dbReference>
<dbReference type="Pfam" id="PF00507">
    <property type="entry name" value="Oxidored_q4"/>
    <property type="match status" value="1"/>
</dbReference>
<comment type="function">
    <text evidence="1">Core subunit of the mitochondrial membrane respiratory chain NADH dehydrogenase (Complex I) that is believed to belong to the minimal assembly required for catalysis. Complex I functions in the transfer of electrons from NADH to the respiratory chain. The immediate electron acceptor for the enzyme is believed to be ubiquinone (By similarity).</text>
</comment>
<comment type="catalytic activity">
    <reaction>
        <text>a ubiquinone + NADH + 5 H(+)(in) = a ubiquinol + NAD(+) + 4 H(+)(out)</text>
        <dbReference type="Rhea" id="RHEA:29091"/>
        <dbReference type="Rhea" id="RHEA-COMP:9565"/>
        <dbReference type="Rhea" id="RHEA-COMP:9566"/>
        <dbReference type="ChEBI" id="CHEBI:15378"/>
        <dbReference type="ChEBI" id="CHEBI:16389"/>
        <dbReference type="ChEBI" id="CHEBI:17976"/>
        <dbReference type="ChEBI" id="CHEBI:57540"/>
        <dbReference type="ChEBI" id="CHEBI:57945"/>
        <dbReference type="EC" id="7.1.1.2"/>
    </reaction>
</comment>
<comment type="subcellular location">
    <subcellularLocation>
        <location evidence="1">Mitochondrion membrane</location>
        <topology evidence="1">Multi-pass membrane protein</topology>
    </subcellularLocation>
</comment>
<comment type="similarity">
    <text evidence="3">Belongs to the complex I subunit 3 family.</text>
</comment>
<keyword id="KW-0249">Electron transport</keyword>
<keyword id="KW-0472">Membrane</keyword>
<keyword id="KW-0496">Mitochondrion</keyword>
<keyword id="KW-0520">NAD</keyword>
<keyword id="KW-0679">Respiratory chain</keyword>
<keyword id="KW-1278">Translocase</keyword>
<keyword id="KW-0812">Transmembrane</keyword>
<keyword id="KW-1133">Transmembrane helix</keyword>
<keyword id="KW-0813">Transport</keyword>
<keyword id="KW-0830">Ubiquinone</keyword>
<proteinExistence type="inferred from homology"/>